<organism>
    <name type="scientific">Vibrio parahaemolyticus serotype O3:K6 (strain RIMD 2210633)</name>
    <dbReference type="NCBI Taxonomy" id="223926"/>
    <lineage>
        <taxon>Bacteria</taxon>
        <taxon>Pseudomonadati</taxon>
        <taxon>Pseudomonadota</taxon>
        <taxon>Gammaproteobacteria</taxon>
        <taxon>Vibrionales</taxon>
        <taxon>Vibrionaceae</taxon>
        <taxon>Vibrio</taxon>
    </lineage>
</organism>
<gene>
    <name evidence="1" type="primary">mutL</name>
    <name type="ordered locus">VP2819</name>
</gene>
<evidence type="ECO:0000255" key="1">
    <source>
        <dbReference type="HAMAP-Rule" id="MF_00149"/>
    </source>
</evidence>
<evidence type="ECO:0000256" key="2">
    <source>
        <dbReference type="SAM" id="MobiDB-lite"/>
    </source>
</evidence>
<sequence length="669" mass="74919">MTIKILPARLANQIAAGEVVERPASVIKELVENSLDSGATRIDIDIEKGGAKLIRVRDNGKGIAKDELGLALSRHATSKIHTLDDLEAIMSLGFRGEALASISSVSRLTLTSRPAAQEEAWSAYSEGRDMQVKLQPAAHPIGTTVEVLDLFFNTPARRKFLRTEKTEFAHIDELLKRIALSRFDVSINVRHNGKVIRQYRAAKNQLQTEKRIAAVCGNAFVRNMLRIELEHQGLKLHGWITTPDGARQQSDLQYCYVNGRMMRDKLINHAIRQSYEMSLKPDQFAAYVLFIELDPHQVDVNVHPAKHEVRFHQARLVHDFIYQALADALAQSSVIDKPQVNESAFHRAEPEERESQPETTPQYSPQSVSTTVPERVYQAIDKTPTYPGRTDYEIKPRDRAPSDSSVREARIADSFKRTDWIESKLAPKPNVGKERHAEPAPSKREVHAYHELLKTPDFESQQAEQPTSIESVREVSLPQVTALGKALVVVDEQFVLMSSDSGVALVSLPRSEFYRTKGQLTPSEGALKAQPLLVPLSMKLDTDLVRLAQDYQQDFAQLGIQLKARNDKALMVMGVPAPLRQQNLQNLVPDLLSYAQTWMKGEKASTQMLPALIDWLAVQVTTVKSHYTLSEAIQIIAELEQLRHGQLPLDDKTFVSAVDFSATIAKLKP</sequence>
<feature type="chain" id="PRO_0000177991" description="DNA mismatch repair protein MutL">
    <location>
        <begin position="1"/>
        <end position="669"/>
    </location>
</feature>
<feature type="region of interest" description="Disordered" evidence="2">
    <location>
        <begin position="343"/>
        <end position="408"/>
    </location>
</feature>
<feature type="compositionally biased region" description="Basic and acidic residues" evidence="2">
    <location>
        <begin position="344"/>
        <end position="356"/>
    </location>
</feature>
<feature type="compositionally biased region" description="Polar residues" evidence="2">
    <location>
        <begin position="357"/>
        <end position="372"/>
    </location>
</feature>
<feature type="compositionally biased region" description="Basic and acidic residues" evidence="2">
    <location>
        <begin position="390"/>
        <end position="408"/>
    </location>
</feature>
<reference key="1">
    <citation type="journal article" date="2003" name="Lancet">
        <title>Genome sequence of Vibrio parahaemolyticus: a pathogenic mechanism distinct from that of V. cholerae.</title>
        <authorList>
            <person name="Makino K."/>
            <person name="Oshima K."/>
            <person name="Kurokawa K."/>
            <person name="Yokoyama K."/>
            <person name="Uda T."/>
            <person name="Tagomori K."/>
            <person name="Iijima Y."/>
            <person name="Najima M."/>
            <person name="Nakano M."/>
            <person name="Yamashita A."/>
            <person name="Kubota Y."/>
            <person name="Kimura S."/>
            <person name="Yasunaga T."/>
            <person name="Honda T."/>
            <person name="Shinagawa H."/>
            <person name="Hattori M."/>
            <person name="Iida T."/>
        </authorList>
    </citation>
    <scope>NUCLEOTIDE SEQUENCE [LARGE SCALE GENOMIC DNA]</scope>
    <source>
        <strain>RIMD 2210633</strain>
    </source>
</reference>
<dbReference type="EMBL" id="BA000031">
    <property type="protein sequence ID" value="BAC61082.1"/>
    <property type="molecule type" value="Genomic_DNA"/>
</dbReference>
<dbReference type="RefSeq" id="NP_799198.1">
    <property type="nucleotide sequence ID" value="NC_004603.1"/>
</dbReference>
<dbReference type="RefSeq" id="WP_005480064.1">
    <property type="nucleotide sequence ID" value="NC_004603.1"/>
</dbReference>
<dbReference type="SMR" id="Q87L05"/>
<dbReference type="GeneID" id="1190369"/>
<dbReference type="KEGG" id="vpa:VP2819"/>
<dbReference type="PATRIC" id="fig|223926.6.peg.2710"/>
<dbReference type="eggNOG" id="COG0323">
    <property type="taxonomic scope" value="Bacteria"/>
</dbReference>
<dbReference type="HOGENOM" id="CLU_004131_4_2_6"/>
<dbReference type="Proteomes" id="UP000002493">
    <property type="component" value="Chromosome 1"/>
</dbReference>
<dbReference type="GO" id="GO:0032300">
    <property type="term" value="C:mismatch repair complex"/>
    <property type="evidence" value="ECO:0007669"/>
    <property type="project" value="InterPro"/>
</dbReference>
<dbReference type="GO" id="GO:0005524">
    <property type="term" value="F:ATP binding"/>
    <property type="evidence" value="ECO:0007669"/>
    <property type="project" value="InterPro"/>
</dbReference>
<dbReference type="GO" id="GO:0016887">
    <property type="term" value="F:ATP hydrolysis activity"/>
    <property type="evidence" value="ECO:0007669"/>
    <property type="project" value="InterPro"/>
</dbReference>
<dbReference type="GO" id="GO:0140664">
    <property type="term" value="F:ATP-dependent DNA damage sensor activity"/>
    <property type="evidence" value="ECO:0007669"/>
    <property type="project" value="InterPro"/>
</dbReference>
<dbReference type="GO" id="GO:0030983">
    <property type="term" value="F:mismatched DNA binding"/>
    <property type="evidence" value="ECO:0007669"/>
    <property type="project" value="InterPro"/>
</dbReference>
<dbReference type="GO" id="GO:0006298">
    <property type="term" value="P:mismatch repair"/>
    <property type="evidence" value="ECO:0007669"/>
    <property type="project" value="UniProtKB-UniRule"/>
</dbReference>
<dbReference type="CDD" id="cd16926">
    <property type="entry name" value="HATPase_MutL-MLH-PMS-like"/>
    <property type="match status" value="1"/>
</dbReference>
<dbReference type="CDD" id="cd03482">
    <property type="entry name" value="MutL_Trans_MutL"/>
    <property type="match status" value="1"/>
</dbReference>
<dbReference type="FunFam" id="3.30.230.10:FF:000013">
    <property type="entry name" value="DNA mismatch repair endonuclease MutL"/>
    <property type="match status" value="1"/>
</dbReference>
<dbReference type="FunFam" id="3.30.565.10:FF:000003">
    <property type="entry name" value="DNA mismatch repair endonuclease MutL"/>
    <property type="match status" value="1"/>
</dbReference>
<dbReference type="Gene3D" id="3.30.230.10">
    <property type="match status" value="1"/>
</dbReference>
<dbReference type="Gene3D" id="3.30.565.10">
    <property type="entry name" value="Histidine kinase-like ATPase, C-terminal domain"/>
    <property type="match status" value="1"/>
</dbReference>
<dbReference type="Gene3D" id="3.30.1540.20">
    <property type="entry name" value="MutL, C-terminal domain, dimerisation subdomain"/>
    <property type="match status" value="1"/>
</dbReference>
<dbReference type="Gene3D" id="3.30.1370.100">
    <property type="entry name" value="MutL, C-terminal domain, regulatory subdomain"/>
    <property type="match status" value="1"/>
</dbReference>
<dbReference type="HAMAP" id="MF_00149">
    <property type="entry name" value="DNA_mis_repair"/>
    <property type="match status" value="1"/>
</dbReference>
<dbReference type="InterPro" id="IPR014762">
    <property type="entry name" value="DNA_mismatch_repair_CS"/>
</dbReference>
<dbReference type="InterPro" id="IPR020667">
    <property type="entry name" value="DNA_mismatch_repair_MutL"/>
</dbReference>
<dbReference type="InterPro" id="IPR013507">
    <property type="entry name" value="DNA_mismatch_S5_2-like"/>
</dbReference>
<dbReference type="InterPro" id="IPR036890">
    <property type="entry name" value="HATPase_C_sf"/>
</dbReference>
<dbReference type="InterPro" id="IPR002099">
    <property type="entry name" value="MutL/Mlh/PMS"/>
</dbReference>
<dbReference type="InterPro" id="IPR038973">
    <property type="entry name" value="MutL/Mlh/Pms-like"/>
</dbReference>
<dbReference type="InterPro" id="IPR014790">
    <property type="entry name" value="MutL_C"/>
</dbReference>
<dbReference type="InterPro" id="IPR042120">
    <property type="entry name" value="MutL_C_dimsub"/>
</dbReference>
<dbReference type="InterPro" id="IPR042121">
    <property type="entry name" value="MutL_C_regsub"/>
</dbReference>
<dbReference type="InterPro" id="IPR037198">
    <property type="entry name" value="MutL_C_sf"/>
</dbReference>
<dbReference type="InterPro" id="IPR020568">
    <property type="entry name" value="Ribosomal_Su5_D2-typ_SF"/>
</dbReference>
<dbReference type="InterPro" id="IPR014721">
    <property type="entry name" value="Ribsml_uS5_D2-typ_fold_subgr"/>
</dbReference>
<dbReference type="NCBIfam" id="TIGR00585">
    <property type="entry name" value="mutl"/>
    <property type="match status" value="1"/>
</dbReference>
<dbReference type="NCBIfam" id="NF000948">
    <property type="entry name" value="PRK00095.1-1"/>
    <property type="match status" value="1"/>
</dbReference>
<dbReference type="PANTHER" id="PTHR10073">
    <property type="entry name" value="DNA MISMATCH REPAIR PROTEIN MLH, PMS, MUTL"/>
    <property type="match status" value="1"/>
</dbReference>
<dbReference type="PANTHER" id="PTHR10073:SF12">
    <property type="entry name" value="DNA MISMATCH REPAIR PROTEIN MLH1"/>
    <property type="match status" value="1"/>
</dbReference>
<dbReference type="Pfam" id="PF01119">
    <property type="entry name" value="DNA_mis_repair"/>
    <property type="match status" value="1"/>
</dbReference>
<dbReference type="Pfam" id="PF13589">
    <property type="entry name" value="HATPase_c_3"/>
    <property type="match status" value="1"/>
</dbReference>
<dbReference type="Pfam" id="PF08676">
    <property type="entry name" value="MutL_C"/>
    <property type="match status" value="1"/>
</dbReference>
<dbReference type="SMART" id="SM01340">
    <property type="entry name" value="DNA_mis_repair"/>
    <property type="match status" value="1"/>
</dbReference>
<dbReference type="SMART" id="SM00853">
    <property type="entry name" value="MutL_C"/>
    <property type="match status" value="1"/>
</dbReference>
<dbReference type="SUPFAM" id="SSF55874">
    <property type="entry name" value="ATPase domain of HSP90 chaperone/DNA topoisomerase II/histidine kinase"/>
    <property type="match status" value="1"/>
</dbReference>
<dbReference type="SUPFAM" id="SSF118116">
    <property type="entry name" value="DNA mismatch repair protein MutL"/>
    <property type="match status" value="1"/>
</dbReference>
<dbReference type="SUPFAM" id="SSF54211">
    <property type="entry name" value="Ribosomal protein S5 domain 2-like"/>
    <property type="match status" value="1"/>
</dbReference>
<dbReference type="PROSITE" id="PS00058">
    <property type="entry name" value="DNA_MISMATCH_REPAIR_1"/>
    <property type="match status" value="1"/>
</dbReference>
<protein>
    <recommendedName>
        <fullName evidence="1">DNA mismatch repair protein MutL</fullName>
    </recommendedName>
</protein>
<keyword id="KW-0227">DNA damage</keyword>
<keyword id="KW-0234">DNA repair</keyword>
<comment type="function">
    <text evidence="1">This protein is involved in the repair of mismatches in DNA. It is required for dam-dependent methyl-directed DNA mismatch repair. May act as a 'molecular matchmaker', a protein that promotes the formation of a stable complex between two or more DNA-binding proteins in an ATP-dependent manner without itself being part of a final effector complex.</text>
</comment>
<comment type="similarity">
    <text evidence="1">Belongs to the DNA mismatch repair MutL/HexB family.</text>
</comment>
<accession>Q87L05</accession>
<name>MUTL_VIBPA</name>
<proteinExistence type="inferred from homology"/>